<protein>
    <recommendedName>
        <fullName evidence="1">Fe/S biogenesis protein NfuA</fullName>
    </recommendedName>
</protein>
<name>NFUA_PSEAE</name>
<feature type="chain" id="PRO_0000209481" description="Fe/S biogenesis protein NfuA">
    <location>
        <begin position="1"/>
        <end position="194"/>
    </location>
</feature>
<feature type="binding site" evidence="1">
    <location>
        <position position="152"/>
    </location>
    <ligand>
        <name>[4Fe-4S] cluster</name>
        <dbReference type="ChEBI" id="CHEBI:49883"/>
    </ligand>
</feature>
<feature type="binding site" evidence="1">
    <location>
        <position position="155"/>
    </location>
    <ligand>
        <name>[4Fe-4S] cluster</name>
        <dbReference type="ChEBI" id="CHEBI:49883"/>
    </ligand>
</feature>
<sequence>MSAITITEAAQAYLAELLEKQSTPGIGIRIFITQPGTQYAETCIAYCKPGEEKVEDTAIALKDFTAWIDAVSEPFLEDAVVDYATDRMGGQLTIKAPNAKVPMVNEDSPITERINYYLQTEINPGLASHGGQVSLVDVVEDNIAVLRFGGGCQGCGMVDMTLKDGVEKTLIERIPELKGVRDVTDHSNKENAYY</sequence>
<organism>
    <name type="scientific">Pseudomonas aeruginosa (strain ATCC 15692 / DSM 22644 / CIP 104116 / JCM 14847 / LMG 12228 / 1C / PRS 101 / PAO1)</name>
    <dbReference type="NCBI Taxonomy" id="208964"/>
    <lineage>
        <taxon>Bacteria</taxon>
        <taxon>Pseudomonadati</taxon>
        <taxon>Pseudomonadota</taxon>
        <taxon>Gammaproteobacteria</taxon>
        <taxon>Pseudomonadales</taxon>
        <taxon>Pseudomonadaceae</taxon>
        <taxon>Pseudomonas</taxon>
    </lineage>
</organism>
<gene>
    <name evidence="1" type="primary">nfuA</name>
    <name type="ordered locus">PA1847</name>
</gene>
<proteinExistence type="inferred from homology"/>
<comment type="function">
    <text evidence="1">Involved in iron-sulfur cluster biogenesis. Binds a 4Fe-4S cluster, can transfer this cluster to apoproteins, and thereby intervenes in the maturation of Fe/S proteins. Could also act as a scaffold/chaperone for damaged Fe/S proteins.</text>
</comment>
<comment type="cofactor">
    <cofactor evidence="1">
        <name>[4Fe-4S] cluster</name>
        <dbReference type="ChEBI" id="CHEBI:49883"/>
    </cofactor>
    <text evidence="1">Binds 1 [4Fe-4S] cluster per subunit. The cluster is presumably bound at the interface of two monomers.</text>
</comment>
<comment type="subunit">
    <text evidence="1">Homodimer.</text>
</comment>
<comment type="similarity">
    <text evidence="1">Belongs to the NfuA family.</text>
</comment>
<dbReference type="EMBL" id="AE004091">
    <property type="protein sequence ID" value="AAG05236.1"/>
    <property type="molecule type" value="Genomic_DNA"/>
</dbReference>
<dbReference type="PIR" id="F83413">
    <property type="entry name" value="F83413"/>
</dbReference>
<dbReference type="RefSeq" id="NP_250538.1">
    <property type="nucleotide sequence ID" value="NC_002516.2"/>
</dbReference>
<dbReference type="RefSeq" id="WP_003088034.1">
    <property type="nucleotide sequence ID" value="NZ_QZGE01000003.1"/>
</dbReference>
<dbReference type="SMR" id="Q9I2P8"/>
<dbReference type="FunCoup" id="Q9I2P8">
    <property type="interactions" value="21"/>
</dbReference>
<dbReference type="STRING" id="208964.PA1847"/>
<dbReference type="PaxDb" id="208964-PA1847"/>
<dbReference type="DNASU" id="880675"/>
<dbReference type="GeneID" id="77221556"/>
<dbReference type="GeneID" id="880675"/>
<dbReference type="KEGG" id="pae:PA1847"/>
<dbReference type="PATRIC" id="fig|208964.12.peg.1920"/>
<dbReference type="PseudoCAP" id="PA1847"/>
<dbReference type="HOGENOM" id="CLU_094569_0_0_6"/>
<dbReference type="InParanoid" id="Q9I2P8"/>
<dbReference type="OrthoDB" id="9785450at2"/>
<dbReference type="PhylomeDB" id="Q9I2P8"/>
<dbReference type="BioCyc" id="PAER208964:G1FZ6-1886-MONOMER"/>
<dbReference type="PHI-base" id="PHI:8452"/>
<dbReference type="Proteomes" id="UP000002438">
    <property type="component" value="Chromosome"/>
</dbReference>
<dbReference type="GO" id="GO:0051539">
    <property type="term" value="F:4 iron, 4 sulfur cluster binding"/>
    <property type="evidence" value="ECO:0000318"/>
    <property type="project" value="GO_Central"/>
</dbReference>
<dbReference type="GO" id="GO:0005506">
    <property type="term" value="F:iron ion binding"/>
    <property type="evidence" value="ECO:0007669"/>
    <property type="project" value="InterPro"/>
</dbReference>
<dbReference type="GO" id="GO:0016226">
    <property type="term" value="P:iron-sulfur cluster assembly"/>
    <property type="evidence" value="ECO:0007669"/>
    <property type="project" value="UniProtKB-UniRule"/>
</dbReference>
<dbReference type="GO" id="GO:0051604">
    <property type="term" value="P:protein maturation"/>
    <property type="evidence" value="ECO:0007669"/>
    <property type="project" value="UniProtKB-UniRule"/>
</dbReference>
<dbReference type="Gene3D" id="3.30.300.130">
    <property type="entry name" value="Fe-S cluster assembly (FSCA)"/>
    <property type="match status" value="1"/>
</dbReference>
<dbReference type="Gene3D" id="2.60.300.12">
    <property type="entry name" value="HesB-like domain"/>
    <property type="match status" value="1"/>
</dbReference>
<dbReference type="HAMAP" id="MF_01637">
    <property type="entry name" value="Fe_S_biogen_NfuA"/>
    <property type="match status" value="1"/>
</dbReference>
<dbReference type="InterPro" id="IPR017726">
    <property type="entry name" value="Fe/S_biogenesis_protein_NfuA"/>
</dbReference>
<dbReference type="InterPro" id="IPR000361">
    <property type="entry name" value="FeS_biogenesis"/>
</dbReference>
<dbReference type="InterPro" id="IPR034904">
    <property type="entry name" value="FSCA_dom_sf"/>
</dbReference>
<dbReference type="InterPro" id="IPR035903">
    <property type="entry name" value="HesB-like_dom_sf"/>
</dbReference>
<dbReference type="InterPro" id="IPR001075">
    <property type="entry name" value="NIF_FeS_clus_asmbl_NifU_C"/>
</dbReference>
<dbReference type="NCBIfam" id="TIGR03341">
    <property type="entry name" value="YhgI_GntY"/>
    <property type="match status" value="1"/>
</dbReference>
<dbReference type="PANTHER" id="PTHR11178:SF51">
    <property type="entry name" value="FE_S BIOGENESIS PROTEIN NFUA"/>
    <property type="match status" value="1"/>
</dbReference>
<dbReference type="PANTHER" id="PTHR11178">
    <property type="entry name" value="IRON-SULFUR CLUSTER SCAFFOLD PROTEIN NFU-RELATED"/>
    <property type="match status" value="1"/>
</dbReference>
<dbReference type="Pfam" id="PF01521">
    <property type="entry name" value="Fe-S_biosyn"/>
    <property type="match status" value="1"/>
</dbReference>
<dbReference type="Pfam" id="PF01106">
    <property type="entry name" value="NifU"/>
    <property type="match status" value="1"/>
</dbReference>
<dbReference type="SUPFAM" id="SSF117916">
    <property type="entry name" value="Fe-S cluster assembly (FSCA) domain-like"/>
    <property type="match status" value="1"/>
</dbReference>
<dbReference type="SUPFAM" id="SSF89360">
    <property type="entry name" value="HesB-like domain"/>
    <property type="match status" value="1"/>
</dbReference>
<keyword id="KW-0004">4Fe-4S</keyword>
<keyword id="KW-0408">Iron</keyword>
<keyword id="KW-0411">Iron-sulfur</keyword>
<keyword id="KW-0479">Metal-binding</keyword>
<keyword id="KW-1185">Reference proteome</keyword>
<evidence type="ECO:0000255" key="1">
    <source>
        <dbReference type="HAMAP-Rule" id="MF_01637"/>
    </source>
</evidence>
<reference key="1">
    <citation type="journal article" date="2000" name="Nature">
        <title>Complete genome sequence of Pseudomonas aeruginosa PAO1, an opportunistic pathogen.</title>
        <authorList>
            <person name="Stover C.K."/>
            <person name="Pham X.-Q.T."/>
            <person name="Erwin A.L."/>
            <person name="Mizoguchi S.D."/>
            <person name="Warrener P."/>
            <person name="Hickey M.J."/>
            <person name="Brinkman F.S.L."/>
            <person name="Hufnagle W.O."/>
            <person name="Kowalik D.J."/>
            <person name="Lagrou M."/>
            <person name="Garber R.L."/>
            <person name="Goltry L."/>
            <person name="Tolentino E."/>
            <person name="Westbrock-Wadman S."/>
            <person name="Yuan Y."/>
            <person name="Brody L.L."/>
            <person name="Coulter S.N."/>
            <person name="Folger K.R."/>
            <person name="Kas A."/>
            <person name="Larbig K."/>
            <person name="Lim R.M."/>
            <person name="Smith K.A."/>
            <person name="Spencer D.H."/>
            <person name="Wong G.K.-S."/>
            <person name="Wu Z."/>
            <person name="Paulsen I.T."/>
            <person name="Reizer J."/>
            <person name="Saier M.H. Jr."/>
            <person name="Hancock R.E.W."/>
            <person name="Lory S."/>
            <person name="Olson M.V."/>
        </authorList>
    </citation>
    <scope>NUCLEOTIDE SEQUENCE [LARGE SCALE GENOMIC DNA]</scope>
    <source>
        <strain>ATCC 15692 / DSM 22644 / CIP 104116 / JCM 14847 / LMG 12228 / 1C / PRS 101 / PAO1</strain>
    </source>
</reference>
<accession>Q9I2P8</accession>